<protein>
    <recommendedName>
        <fullName evidence="1">L-lactate dehydrogenase</fullName>
        <ecNumber evidence="1">1.1.-.-</ecNumber>
    </recommendedName>
</protein>
<accession>B7M492</accession>
<comment type="function">
    <text evidence="1">Catalyzes the conversion of L-lactate to pyruvate. Is coupled to the respiratory chain.</text>
</comment>
<comment type="catalytic activity">
    <reaction evidence="1">
        <text>(S)-lactate + A = pyruvate + AH2</text>
        <dbReference type="Rhea" id="RHEA:45816"/>
        <dbReference type="ChEBI" id="CHEBI:13193"/>
        <dbReference type="ChEBI" id="CHEBI:15361"/>
        <dbReference type="ChEBI" id="CHEBI:16651"/>
        <dbReference type="ChEBI" id="CHEBI:17499"/>
    </reaction>
</comment>
<comment type="cofactor">
    <cofactor evidence="1">
        <name>FMN</name>
        <dbReference type="ChEBI" id="CHEBI:58210"/>
    </cofactor>
</comment>
<comment type="subcellular location">
    <subcellularLocation>
        <location evidence="1">Cell inner membrane</location>
        <topology evidence="1">Peripheral membrane protein</topology>
    </subcellularLocation>
</comment>
<comment type="similarity">
    <text evidence="1">Belongs to the FMN-dependent alpha-hydroxy acid dehydrogenase family.</text>
</comment>
<keyword id="KW-0997">Cell inner membrane</keyword>
<keyword id="KW-1003">Cell membrane</keyword>
<keyword id="KW-0285">Flavoprotein</keyword>
<keyword id="KW-0288">FMN</keyword>
<keyword id="KW-0472">Membrane</keyword>
<keyword id="KW-0560">Oxidoreductase</keyword>
<dbReference type="EC" id="1.1.-.-" evidence="1"/>
<dbReference type="EMBL" id="CU928160">
    <property type="protein sequence ID" value="CAR00575.1"/>
    <property type="molecule type" value="Genomic_DNA"/>
</dbReference>
<dbReference type="RefSeq" id="WP_000586964.1">
    <property type="nucleotide sequence ID" value="NC_011741.1"/>
</dbReference>
<dbReference type="SMR" id="B7M492"/>
<dbReference type="GeneID" id="93778319"/>
<dbReference type="KEGG" id="ecr:ECIAI1_3778"/>
<dbReference type="HOGENOM" id="CLU_020639_0_0_6"/>
<dbReference type="GO" id="GO:0005886">
    <property type="term" value="C:plasma membrane"/>
    <property type="evidence" value="ECO:0007669"/>
    <property type="project" value="UniProtKB-SubCell"/>
</dbReference>
<dbReference type="GO" id="GO:0010181">
    <property type="term" value="F:FMN binding"/>
    <property type="evidence" value="ECO:0007669"/>
    <property type="project" value="InterPro"/>
</dbReference>
<dbReference type="GO" id="GO:0004459">
    <property type="term" value="F:L-lactate dehydrogenase activity"/>
    <property type="evidence" value="ECO:0007669"/>
    <property type="project" value="UniProtKB-UniRule"/>
</dbReference>
<dbReference type="GO" id="GO:0009060">
    <property type="term" value="P:aerobic respiration"/>
    <property type="evidence" value="ECO:0007669"/>
    <property type="project" value="TreeGrafter"/>
</dbReference>
<dbReference type="GO" id="GO:0006089">
    <property type="term" value="P:lactate metabolic process"/>
    <property type="evidence" value="ECO:0007669"/>
    <property type="project" value="UniProtKB-UniRule"/>
</dbReference>
<dbReference type="CDD" id="cd02809">
    <property type="entry name" value="alpha_hydroxyacid_oxid_FMN"/>
    <property type="match status" value="1"/>
</dbReference>
<dbReference type="FunFam" id="3.20.20.70:FF:000029">
    <property type="entry name" value="L-lactate dehydrogenase"/>
    <property type="match status" value="1"/>
</dbReference>
<dbReference type="Gene3D" id="3.20.20.70">
    <property type="entry name" value="Aldolase class I"/>
    <property type="match status" value="1"/>
</dbReference>
<dbReference type="HAMAP" id="MF_01559">
    <property type="entry name" value="L_lact_dehydr"/>
    <property type="match status" value="1"/>
</dbReference>
<dbReference type="InterPro" id="IPR013785">
    <property type="entry name" value="Aldolase_TIM"/>
</dbReference>
<dbReference type="InterPro" id="IPR012133">
    <property type="entry name" value="Alpha-hydoxy_acid_DH_FMN"/>
</dbReference>
<dbReference type="InterPro" id="IPR000262">
    <property type="entry name" value="FMN-dep_DH"/>
</dbReference>
<dbReference type="InterPro" id="IPR037396">
    <property type="entry name" value="FMN_HAD"/>
</dbReference>
<dbReference type="InterPro" id="IPR008259">
    <property type="entry name" value="FMN_hydac_DH_AS"/>
</dbReference>
<dbReference type="InterPro" id="IPR020920">
    <property type="entry name" value="LldD"/>
</dbReference>
<dbReference type="NCBIfam" id="NF033901">
    <property type="entry name" value="L_lactate_LldD"/>
    <property type="match status" value="1"/>
</dbReference>
<dbReference type="NCBIfam" id="NF008398">
    <property type="entry name" value="PRK11197.1"/>
    <property type="match status" value="1"/>
</dbReference>
<dbReference type="PANTHER" id="PTHR10578:SF85">
    <property type="entry name" value="L-LACTATE DEHYDROGENASE"/>
    <property type="match status" value="1"/>
</dbReference>
<dbReference type="PANTHER" id="PTHR10578">
    <property type="entry name" value="S -2-HYDROXY-ACID OXIDASE-RELATED"/>
    <property type="match status" value="1"/>
</dbReference>
<dbReference type="Pfam" id="PF01070">
    <property type="entry name" value="FMN_dh"/>
    <property type="match status" value="1"/>
</dbReference>
<dbReference type="PIRSF" id="PIRSF000138">
    <property type="entry name" value="Al-hdrx_acd_dh"/>
    <property type="match status" value="1"/>
</dbReference>
<dbReference type="SUPFAM" id="SSF51395">
    <property type="entry name" value="FMN-linked oxidoreductases"/>
    <property type="match status" value="1"/>
</dbReference>
<dbReference type="PROSITE" id="PS00557">
    <property type="entry name" value="FMN_HYDROXY_ACID_DH_1"/>
    <property type="match status" value="1"/>
</dbReference>
<dbReference type="PROSITE" id="PS51349">
    <property type="entry name" value="FMN_HYDROXY_ACID_DH_2"/>
    <property type="match status" value="1"/>
</dbReference>
<proteinExistence type="inferred from homology"/>
<organism>
    <name type="scientific">Escherichia coli O8 (strain IAI1)</name>
    <dbReference type="NCBI Taxonomy" id="585034"/>
    <lineage>
        <taxon>Bacteria</taxon>
        <taxon>Pseudomonadati</taxon>
        <taxon>Pseudomonadota</taxon>
        <taxon>Gammaproteobacteria</taxon>
        <taxon>Enterobacterales</taxon>
        <taxon>Enterobacteriaceae</taxon>
        <taxon>Escherichia</taxon>
    </lineage>
</organism>
<feature type="chain" id="PRO_0000383429" description="L-lactate dehydrogenase">
    <location>
        <begin position="1"/>
        <end position="396"/>
    </location>
</feature>
<feature type="domain" description="FMN hydroxy acid dehydrogenase" evidence="1">
    <location>
        <begin position="1"/>
        <end position="380"/>
    </location>
</feature>
<feature type="active site" description="Proton acceptor" evidence="1">
    <location>
        <position position="275"/>
    </location>
</feature>
<feature type="binding site" evidence="1">
    <location>
        <position position="24"/>
    </location>
    <ligand>
        <name>substrate</name>
    </ligand>
</feature>
<feature type="binding site" evidence="1">
    <location>
        <position position="106"/>
    </location>
    <ligand>
        <name>FMN</name>
        <dbReference type="ChEBI" id="CHEBI:58210"/>
    </ligand>
</feature>
<feature type="binding site" evidence="1">
    <location>
        <position position="127"/>
    </location>
    <ligand>
        <name>FMN</name>
        <dbReference type="ChEBI" id="CHEBI:58210"/>
    </ligand>
</feature>
<feature type="binding site" evidence="1">
    <location>
        <position position="129"/>
    </location>
    <ligand>
        <name>substrate</name>
    </ligand>
</feature>
<feature type="binding site" evidence="1">
    <location>
        <position position="155"/>
    </location>
    <ligand>
        <name>FMN</name>
        <dbReference type="ChEBI" id="CHEBI:58210"/>
    </ligand>
</feature>
<feature type="binding site" evidence="1">
    <location>
        <position position="164"/>
    </location>
    <ligand>
        <name>substrate</name>
    </ligand>
</feature>
<feature type="binding site" evidence="1">
    <location>
        <position position="251"/>
    </location>
    <ligand>
        <name>FMN</name>
        <dbReference type="ChEBI" id="CHEBI:58210"/>
    </ligand>
</feature>
<feature type="binding site" evidence="1">
    <location>
        <position position="278"/>
    </location>
    <ligand>
        <name>substrate</name>
    </ligand>
</feature>
<feature type="binding site" evidence="1">
    <location>
        <begin position="306"/>
        <end position="330"/>
    </location>
    <ligand>
        <name>FMN</name>
        <dbReference type="ChEBI" id="CHEBI:58210"/>
    </ligand>
</feature>
<evidence type="ECO:0000255" key="1">
    <source>
        <dbReference type="HAMAP-Rule" id="MF_01559"/>
    </source>
</evidence>
<sequence>MIISAASDYRAAAQRILPPFLFHYMDGGAYSEYTLRRNVEDLSEVALRQRILKNMSDLSLETTLFNEKLSMPVALAPVGLCGMYARRGEVQAAKAADAHGIPFTLSTVSVCPIEEVAPAIKRPMWFQLYVLRDRGFMRNALERAKAAGCSTLVFTVDMPTPGARYRDAHSGMSGPNAAMRRYLQAVTHPQWAWDVGLNGRPHDLGNISAYLGKPTGLEDYIGWLGNNFDPSISWKDLEWIRDFWDGPMVIKGILDPEDARDAVRFGADGIVVSNHGGRQLDGVLSSARALPAIADAVKGDIAILADSGIRNGLDVVRMIALGADTVLLGRAFLYALATAGQAGVANLLNLIEKEMKVAMTLTGAKSISEITQDSLVQGLGKELPTALAPMAKGNAA</sequence>
<name>LLDD_ECO8A</name>
<reference key="1">
    <citation type="journal article" date="2009" name="PLoS Genet.">
        <title>Organised genome dynamics in the Escherichia coli species results in highly diverse adaptive paths.</title>
        <authorList>
            <person name="Touchon M."/>
            <person name="Hoede C."/>
            <person name="Tenaillon O."/>
            <person name="Barbe V."/>
            <person name="Baeriswyl S."/>
            <person name="Bidet P."/>
            <person name="Bingen E."/>
            <person name="Bonacorsi S."/>
            <person name="Bouchier C."/>
            <person name="Bouvet O."/>
            <person name="Calteau A."/>
            <person name="Chiapello H."/>
            <person name="Clermont O."/>
            <person name="Cruveiller S."/>
            <person name="Danchin A."/>
            <person name="Diard M."/>
            <person name="Dossat C."/>
            <person name="Karoui M.E."/>
            <person name="Frapy E."/>
            <person name="Garry L."/>
            <person name="Ghigo J.M."/>
            <person name="Gilles A.M."/>
            <person name="Johnson J."/>
            <person name="Le Bouguenec C."/>
            <person name="Lescat M."/>
            <person name="Mangenot S."/>
            <person name="Martinez-Jehanne V."/>
            <person name="Matic I."/>
            <person name="Nassif X."/>
            <person name="Oztas S."/>
            <person name="Petit M.A."/>
            <person name="Pichon C."/>
            <person name="Rouy Z."/>
            <person name="Ruf C.S."/>
            <person name="Schneider D."/>
            <person name="Tourret J."/>
            <person name="Vacherie B."/>
            <person name="Vallenet D."/>
            <person name="Medigue C."/>
            <person name="Rocha E.P.C."/>
            <person name="Denamur E."/>
        </authorList>
    </citation>
    <scope>NUCLEOTIDE SEQUENCE [LARGE SCALE GENOMIC DNA]</scope>
    <source>
        <strain>IAI1</strain>
    </source>
</reference>
<gene>
    <name evidence="1" type="primary">lldD</name>
    <name type="ordered locus">ECIAI1_3778</name>
</gene>